<gene>
    <name evidence="1" type="primary">pgk</name>
    <name type="ordered locus">str1782</name>
</gene>
<name>PGK_STRT1</name>
<keyword id="KW-0067">ATP-binding</keyword>
<keyword id="KW-0963">Cytoplasm</keyword>
<keyword id="KW-0324">Glycolysis</keyword>
<keyword id="KW-0418">Kinase</keyword>
<keyword id="KW-0547">Nucleotide-binding</keyword>
<keyword id="KW-0808">Transferase</keyword>
<dbReference type="EC" id="2.7.2.3" evidence="1"/>
<dbReference type="EMBL" id="CP000024">
    <property type="protein sequence ID" value="AAV63299.1"/>
    <property type="molecule type" value="Genomic_DNA"/>
</dbReference>
<dbReference type="RefSeq" id="WP_002947150.1">
    <property type="nucleotide sequence ID" value="NC_006449.1"/>
</dbReference>
<dbReference type="SMR" id="Q5LY23"/>
<dbReference type="KEGG" id="stc:str1782"/>
<dbReference type="HOGENOM" id="CLU_025427_0_2_9"/>
<dbReference type="UniPathway" id="UPA00109">
    <property type="reaction ID" value="UER00185"/>
</dbReference>
<dbReference type="GO" id="GO:0005829">
    <property type="term" value="C:cytosol"/>
    <property type="evidence" value="ECO:0007669"/>
    <property type="project" value="TreeGrafter"/>
</dbReference>
<dbReference type="GO" id="GO:0043531">
    <property type="term" value="F:ADP binding"/>
    <property type="evidence" value="ECO:0007669"/>
    <property type="project" value="TreeGrafter"/>
</dbReference>
<dbReference type="GO" id="GO:0005524">
    <property type="term" value="F:ATP binding"/>
    <property type="evidence" value="ECO:0007669"/>
    <property type="project" value="UniProtKB-KW"/>
</dbReference>
<dbReference type="GO" id="GO:0004618">
    <property type="term" value="F:phosphoglycerate kinase activity"/>
    <property type="evidence" value="ECO:0007669"/>
    <property type="project" value="UniProtKB-UniRule"/>
</dbReference>
<dbReference type="GO" id="GO:0006094">
    <property type="term" value="P:gluconeogenesis"/>
    <property type="evidence" value="ECO:0007669"/>
    <property type="project" value="TreeGrafter"/>
</dbReference>
<dbReference type="GO" id="GO:0006096">
    <property type="term" value="P:glycolytic process"/>
    <property type="evidence" value="ECO:0007669"/>
    <property type="project" value="UniProtKB-UniRule"/>
</dbReference>
<dbReference type="FunFam" id="3.40.50.1260:FF:000001">
    <property type="entry name" value="Phosphoglycerate kinase"/>
    <property type="match status" value="1"/>
</dbReference>
<dbReference type="FunFam" id="3.40.50.1260:FF:000008">
    <property type="entry name" value="Phosphoglycerate kinase"/>
    <property type="match status" value="1"/>
</dbReference>
<dbReference type="Gene3D" id="3.40.50.1260">
    <property type="entry name" value="Phosphoglycerate kinase, N-terminal domain"/>
    <property type="match status" value="2"/>
</dbReference>
<dbReference type="HAMAP" id="MF_00145">
    <property type="entry name" value="Phosphoglyc_kinase"/>
    <property type="match status" value="1"/>
</dbReference>
<dbReference type="InterPro" id="IPR001576">
    <property type="entry name" value="Phosphoglycerate_kinase"/>
</dbReference>
<dbReference type="InterPro" id="IPR015911">
    <property type="entry name" value="Phosphoglycerate_kinase_CS"/>
</dbReference>
<dbReference type="InterPro" id="IPR015824">
    <property type="entry name" value="Phosphoglycerate_kinase_N"/>
</dbReference>
<dbReference type="InterPro" id="IPR036043">
    <property type="entry name" value="Phosphoglycerate_kinase_sf"/>
</dbReference>
<dbReference type="PANTHER" id="PTHR11406">
    <property type="entry name" value="PHOSPHOGLYCERATE KINASE"/>
    <property type="match status" value="1"/>
</dbReference>
<dbReference type="PANTHER" id="PTHR11406:SF23">
    <property type="entry name" value="PHOSPHOGLYCERATE KINASE 1, CHLOROPLASTIC-RELATED"/>
    <property type="match status" value="1"/>
</dbReference>
<dbReference type="Pfam" id="PF00162">
    <property type="entry name" value="PGK"/>
    <property type="match status" value="1"/>
</dbReference>
<dbReference type="PIRSF" id="PIRSF000724">
    <property type="entry name" value="Pgk"/>
    <property type="match status" value="1"/>
</dbReference>
<dbReference type="PRINTS" id="PR00477">
    <property type="entry name" value="PHGLYCKINASE"/>
</dbReference>
<dbReference type="SUPFAM" id="SSF53748">
    <property type="entry name" value="Phosphoglycerate kinase"/>
    <property type="match status" value="1"/>
</dbReference>
<dbReference type="PROSITE" id="PS00111">
    <property type="entry name" value="PGLYCERATE_KINASE"/>
    <property type="match status" value="1"/>
</dbReference>
<sequence length="399" mass="42217">MAKLTVKDVELKGKKVLVRVDFNVPVKDGVITNDNRITAALPTIKYILEQGGRAILFSHLGRVKEEADKEGKSLAPVAADLAAKLGQDVKFIPGVTRGAELEAAVNALEDGQVLLVENTRFEDVDGKKESKNDPELGKYWASLGDGIFVNDAFGTAHRAHASNVGISANVEKAVAGFLLENEIAYIQEAVENPERPFVAILGGSKVSDKIGVIENLLEKADKVLIGGGMTYTFFKAQGIEIGNSLVEEDKLDVAKALLEKSNGKLILPVDSKEANAFADYTEVKYTEGEAVDPGFLGLDIGPKSIAKFDEALTGAKTVVWNGPMGVFENPDFQAGTIGVMDAIVKQPGVKSIIGGGDSAAAAINLGYADKFSWISTGGGASMELLEGKELPGLAALTEK</sequence>
<organism>
    <name type="scientific">Streptococcus thermophilus (strain CNRZ 1066)</name>
    <dbReference type="NCBI Taxonomy" id="299768"/>
    <lineage>
        <taxon>Bacteria</taxon>
        <taxon>Bacillati</taxon>
        <taxon>Bacillota</taxon>
        <taxon>Bacilli</taxon>
        <taxon>Lactobacillales</taxon>
        <taxon>Streptococcaceae</taxon>
        <taxon>Streptococcus</taxon>
    </lineage>
</organism>
<protein>
    <recommendedName>
        <fullName evidence="1">Phosphoglycerate kinase</fullName>
        <ecNumber evidence="1">2.7.2.3</ecNumber>
    </recommendedName>
</protein>
<feature type="chain" id="PRO_1000009663" description="Phosphoglycerate kinase">
    <location>
        <begin position="1"/>
        <end position="399"/>
    </location>
</feature>
<feature type="binding site" evidence="1">
    <location>
        <begin position="21"/>
        <end position="23"/>
    </location>
    <ligand>
        <name>substrate</name>
    </ligand>
</feature>
<feature type="binding site" evidence="1">
    <location>
        <position position="36"/>
    </location>
    <ligand>
        <name>substrate</name>
    </ligand>
</feature>
<feature type="binding site" evidence="1">
    <location>
        <begin position="59"/>
        <end position="62"/>
    </location>
    <ligand>
        <name>substrate</name>
    </ligand>
</feature>
<feature type="binding site" evidence="1">
    <location>
        <position position="120"/>
    </location>
    <ligand>
        <name>substrate</name>
    </ligand>
</feature>
<feature type="binding site" evidence="1">
    <location>
        <position position="158"/>
    </location>
    <ligand>
        <name>substrate</name>
    </ligand>
</feature>
<feature type="binding site" evidence="1">
    <location>
        <position position="209"/>
    </location>
    <ligand>
        <name>ATP</name>
        <dbReference type="ChEBI" id="CHEBI:30616"/>
    </ligand>
</feature>
<feature type="binding site" evidence="1">
    <location>
        <position position="297"/>
    </location>
    <ligand>
        <name>ATP</name>
        <dbReference type="ChEBI" id="CHEBI:30616"/>
    </ligand>
</feature>
<feature type="binding site" evidence="1">
    <location>
        <position position="328"/>
    </location>
    <ligand>
        <name>ATP</name>
        <dbReference type="ChEBI" id="CHEBI:30616"/>
    </ligand>
</feature>
<feature type="binding site" evidence="1">
    <location>
        <begin position="355"/>
        <end position="358"/>
    </location>
    <ligand>
        <name>ATP</name>
        <dbReference type="ChEBI" id="CHEBI:30616"/>
    </ligand>
</feature>
<reference key="1">
    <citation type="journal article" date="2004" name="Nat. Biotechnol.">
        <title>Complete sequence and comparative genome analysis of the dairy bacterium Streptococcus thermophilus.</title>
        <authorList>
            <person name="Bolotin A."/>
            <person name="Quinquis B."/>
            <person name="Renault P."/>
            <person name="Sorokin A."/>
            <person name="Ehrlich S.D."/>
            <person name="Kulakauskas S."/>
            <person name="Lapidus A."/>
            <person name="Goltsman E."/>
            <person name="Mazur M."/>
            <person name="Pusch G.D."/>
            <person name="Fonstein M."/>
            <person name="Overbeek R."/>
            <person name="Kyprides N."/>
            <person name="Purnelle B."/>
            <person name="Prozzi D."/>
            <person name="Ngui K."/>
            <person name="Masuy D."/>
            <person name="Hancy F."/>
            <person name="Burteau S."/>
            <person name="Boutry M."/>
            <person name="Delcour J."/>
            <person name="Goffeau A."/>
            <person name="Hols P."/>
        </authorList>
    </citation>
    <scope>NUCLEOTIDE SEQUENCE [LARGE SCALE GENOMIC DNA]</scope>
    <source>
        <strain>CNRZ 1066</strain>
    </source>
</reference>
<comment type="catalytic activity">
    <reaction evidence="1">
        <text>(2R)-3-phosphoglycerate + ATP = (2R)-3-phospho-glyceroyl phosphate + ADP</text>
        <dbReference type="Rhea" id="RHEA:14801"/>
        <dbReference type="ChEBI" id="CHEBI:30616"/>
        <dbReference type="ChEBI" id="CHEBI:57604"/>
        <dbReference type="ChEBI" id="CHEBI:58272"/>
        <dbReference type="ChEBI" id="CHEBI:456216"/>
        <dbReference type="EC" id="2.7.2.3"/>
    </reaction>
</comment>
<comment type="pathway">
    <text evidence="1">Carbohydrate degradation; glycolysis; pyruvate from D-glyceraldehyde 3-phosphate: step 2/5.</text>
</comment>
<comment type="subunit">
    <text evidence="1">Monomer.</text>
</comment>
<comment type="subcellular location">
    <subcellularLocation>
        <location evidence="1">Cytoplasm</location>
    </subcellularLocation>
</comment>
<comment type="similarity">
    <text evidence="1">Belongs to the phosphoglycerate kinase family.</text>
</comment>
<proteinExistence type="inferred from homology"/>
<evidence type="ECO:0000255" key="1">
    <source>
        <dbReference type="HAMAP-Rule" id="MF_00145"/>
    </source>
</evidence>
<accession>Q5LY23</accession>